<gene>
    <name evidence="1" type="primary">speD</name>
    <name type="ordered locus">SBO_0109</name>
</gene>
<organism>
    <name type="scientific">Shigella boydii serotype 4 (strain Sb227)</name>
    <dbReference type="NCBI Taxonomy" id="300268"/>
    <lineage>
        <taxon>Bacteria</taxon>
        <taxon>Pseudomonadati</taxon>
        <taxon>Pseudomonadota</taxon>
        <taxon>Gammaproteobacteria</taxon>
        <taxon>Enterobacterales</taxon>
        <taxon>Enterobacteriaceae</taxon>
        <taxon>Shigella</taxon>
    </lineage>
</organism>
<keyword id="KW-0068">Autocatalytic cleavage</keyword>
<keyword id="KW-0210">Decarboxylase</keyword>
<keyword id="KW-0456">Lyase</keyword>
<keyword id="KW-0620">Polyamine biosynthesis</keyword>
<keyword id="KW-0670">Pyruvate</keyword>
<keyword id="KW-0949">S-adenosyl-L-methionine</keyword>
<keyword id="KW-0704">Schiff base</keyword>
<keyword id="KW-0745">Spermidine biosynthesis</keyword>
<keyword id="KW-0865">Zymogen</keyword>
<evidence type="ECO:0000255" key="1">
    <source>
        <dbReference type="HAMAP-Rule" id="MF_00465"/>
    </source>
</evidence>
<reference key="1">
    <citation type="journal article" date="2005" name="Nucleic Acids Res.">
        <title>Genome dynamics and diversity of Shigella species, the etiologic agents of bacillary dysentery.</title>
        <authorList>
            <person name="Yang F."/>
            <person name="Yang J."/>
            <person name="Zhang X."/>
            <person name="Chen L."/>
            <person name="Jiang Y."/>
            <person name="Yan Y."/>
            <person name="Tang X."/>
            <person name="Wang J."/>
            <person name="Xiong Z."/>
            <person name="Dong J."/>
            <person name="Xue Y."/>
            <person name="Zhu Y."/>
            <person name="Xu X."/>
            <person name="Sun L."/>
            <person name="Chen S."/>
            <person name="Nie H."/>
            <person name="Peng J."/>
            <person name="Xu J."/>
            <person name="Wang Y."/>
            <person name="Yuan Z."/>
            <person name="Wen Y."/>
            <person name="Yao Z."/>
            <person name="Shen Y."/>
            <person name="Qiang B."/>
            <person name="Hou Y."/>
            <person name="Yu J."/>
            <person name="Jin Q."/>
        </authorList>
    </citation>
    <scope>NUCLEOTIDE SEQUENCE [LARGE SCALE GENOMIC DNA]</scope>
    <source>
        <strain>Sb227</strain>
    </source>
</reference>
<name>SPED_SHIBS</name>
<feature type="chain" id="PRO_0000273609" description="S-adenosylmethionine decarboxylase beta chain" evidence="1">
    <location>
        <begin position="1"/>
        <end position="111"/>
    </location>
</feature>
<feature type="chain" id="PRO_0000273610" description="S-adenosylmethionine decarboxylase alpha chain" evidence="1">
    <location>
        <begin position="112"/>
        <end position="264"/>
    </location>
</feature>
<feature type="active site" description="Schiff-base intermediate with substrate; via pyruvic acid" evidence="1">
    <location>
        <position position="112"/>
    </location>
</feature>
<feature type="active site" description="Proton acceptor; for processing activity" evidence="1">
    <location>
        <position position="117"/>
    </location>
</feature>
<feature type="active site" description="Proton donor; for catalytic activity" evidence="1">
    <location>
        <position position="140"/>
    </location>
</feature>
<feature type="site" description="Cleavage (non-hydrolytic); by autolysis" evidence="1">
    <location>
        <begin position="111"/>
        <end position="112"/>
    </location>
</feature>
<feature type="modified residue" description="Pyruvic acid (Ser); by autocatalysis" evidence="1">
    <location>
        <position position="112"/>
    </location>
</feature>
<proteinExistence type="inferred from homology"/>
<accession>Q326B6</accession>
<dbReference type="EC" id="4.1.1.50" evidence="1"/>
<dbReference type="EMBL" id="CP000036">
    <property type="protein sequence ID" value="ABB64842.1"/>
    <property type="molecule type" value="Genomic_DNA"/>
</dbReference>
<dbReference type="RefSeq" id="WP_000734287.1">
    <property type="nucleotide sequence ID" value="NC_007613.1"/>
</dbReference>
<dbReference type="GeneID" id="93777316"/>
<dbReference type="KEGG" id="sbo:SBO_0109"/>
<dbReference type="HOGENOM" id="CLU_092007_0_0_6"/>
<dbReference type="UniPathway" id="UPA00331">
    <property type="reaction ID" value="UER00451"/>
</dbReference>
<dbReference type="Proteomes" id="UP000007067">
    <property type="component" value="Chromosome"/>
</dbReference>
<dbReference type="GO" id="GO:0005829">
    <property type="term" value="C:cytosol"/>
    <property type="evidence" value="ECO:0007669"/>
    <property type="project" value="TreeGrafter"/>
</dbReference>
<dbReference type="GO" id="GO:0004014">
    <property type="term" value="F:adenosylmethionine decarboxylase activity"/>
    <property type="evidence" value="ECO:0007669"/>
    <property type="project" value="UniProtKB-UniRule"/>
</dbReference>
<dbReference type="GO" id="GO:0008295">
    <property type="term" value="P:spermidine biosynthetic process"/>
    <property type="evidence" value="ECO:0007669"/>
    <property type="project" value="UniProtKB-UniRule"/>
</dbReference>
<dbReference type="FunFam" id="3.60.90.10:FF:000001">
    <property type="entry name" value="S-adenosylmethionine decarboxylase proenzyme"/>
    <property type="match status" value="1"/>
</dbReference>
<dbReference type="Gene3D" id="3.60.90.10">
    <property type="entry name" value="S-adenosylmethionine decarboxylase"/>
    <property type="match status" value="1"/>
</dbReference>
<dbReference type="HAMAP" id="MF_00465">
    <property type="entry name" value="AdoMetDC_2"/>
    <property type="match status" value="1"/>
</dbReference>
<dbReference type="InterPro" id="IPR003826">
    <property type="entry name" value="AdoMetDC_fam_prok"/>
</dbReference>
<dbReference type="InterPro" id="IPR009165">
    <property type="entry name" value="S-AdoMet_deCO2ase_bac"/>
</dbReference>
<dbReference type="InterPro" id="IPR016067">
    <property type="entry name" value="S-AdoMet_deCO2ase_core"/>
</dbReference>
<dbReference type="NCBIfam" id="TIGR03331">
    <property type="entry name" value="SAM_DCase_Eco"/>
    <property type="match status" value="1"/>
</dbReference>
<dbReference type="PANTHER" id="PTHR33866">
    <property type="entry name" value="S-ADENOSYLMETHIONINE DECARBOXYLASE PROENZYME"/>
    <property type="match status" value="1"/>
</dbReference>
<dbReference type="PANTHER" id="PTHR33866:SF1">
    <property type="entry name" value="S-ADENOSYLMETHIONINE DECARBOXYLASE PROENZYME"/>
    <property type="match status" value="1"/>
</dbReference>
<dbReference type="Pfam" id="PF02675">
    <property type="entry name" value="AdoMet_dc"/>
    <property type="match status" value="1"/>
</dbReference>
<dbReference type="PIRSF" id="PIRSF001356">
    <property type="entry name" value="SAM_decarboxylas"/>
    <property type="match status" value="1"/>
</dbReference>
<dbReference type="SUPFAM" id="SSF56276">
    <property type="entry name" value="S-adenosylmethionine decarboxylase"/>
    <property type="match status" value="1"/>
</dbReference>
<comment type="function">
    <text evidence="1">Catalyzes the decarboxylation of S-adenosylmethionine to S-adenosylmethioninamine (dcAdoMet), the propylamine donor required for the synthesis of the polyamines spermine and spermidine from the diamine putrescine.</text>
</comment>
<comment type="catalytic activity">
    <reaction evidence="1">
        <text>S-adenosyl-L-methionine + H(+) = S-adenosyl 3-(methylsulfanyl)propylamine + CO2</text>
        <dbReference type="Rhea" id="RHEA:15981"/>
        <dbReference type="ChEBI" id="CHEBI:15378"/>
        <dbReference type="ChEBI" id="CHEBI:16526"/>
        <dbReference type="ChEBI" id="CHEBI:57443"/>
        <dbReference type="ChEBI" id="CHEBI:59789"/>
        <dbReference type="EC" id="4.1.1.50"/>
    </reaction>
</comment>
<comment type="cofactor">
    <cofactor evidence="1">
        <name>pyruvate</name>
        <dbReference type="ChEBI" id="CHEBI:15361"/>
    </cofactor>
    <text evidence="1">Binds 1 pyruvoyl group covalently per subunit.</text>
</comment>
<comment type="pathway">
    <text evidence="1">Amine and polyamine biosynthesis; S-adenosylmethioninamine biosynthesis; S-adenosylmethioninamine from S-adenosyl-L-methionine: step 1/1.</text>
</comment>
<comment type="subunit">
    <text evidence="1">Heterooctamer of four alpha and four beta chains arranged as a tetramer of alpha/beta heterodimers.</text>
</comment>
<comment type="PTM">
    <text evidence="1">Is synthesized initially as an inactive proenzyme. Formation of the active enzyme involves a self-maturation process in which the active site pyruvoyl group is generated from an internal serine residue via an autocatalytic post-translational modification. Two non-identical subunits are generated from the proenzyme in this reaction, and the pyruvate is formed at the N-terminus of the alpha chain, which is derived from the carboxyl end of the proenzyme. The post-translation cleavage follows an unusual pathway, termed non-hydrolytic serinolysis, in which the side chain hydroxyl group of the serine supplies its oxygen atom to form the C-terminus of the beta chain, while the remainder of the serine residue undergoes an oxidative deamination to produce ammonia and the pyruvoyl group blocking the N-terminus of the alpha chain.</text>
</comment>
<comment type="similarity">
    <text evidence="1">Belongs to the prokaryotic AdoMetDC family. Type 2 subfamily.</text>
</comment>
<sequence>MKKLKLHGFNNLTKSLSFCIYDICYAKTAEERDGYIAYIDELYNANRLTEILSETCSIIGANILNIARQDYEPQGASVTILVSEEPVDPKLIDKTEHPGPLPETVVAHLDKSHICVHTYPESHPEGGLCTFRADIEVSTCGVISPLKALNYLIHQLESDIVTIDYRVRGFTRDINGMKHFIDHEINSIQNFMSDDMKALYDMVDVNVYQENIFHTKMLLKEFDLKHYMFHTKPEDLTDSERQEITAALWKEMREIYYGRNMPAV</sequence>
<protein>
    <recommendedName>
        <fullName evidence="1">S-adenosylmethionine decarboxylase proenzyme</fullName>
        <shortName evidence="1">AdoMetDC</shortName>
        <shortName evidence="1">SAMDC</shortName>
        <ecNumber evidence="1">4.1.1.50</ecNumber>
    </recommendedName>
    <component>
        <recommendedName>
            <fullName evidence="1">S-adenosylmethionine decarboxylase beta chain</fullName>
        </recommendedName>
    </component>
    <component>
        <recommendedName>
            <fullName evidence="1">S-adenosylmethionine decarboxylase alpha chain</fullName>
        </recommendedName>
    </component>
</protein>